<comment type="function">
    <text evidence="5">Lipase that, together with lipl-1, plays a role in the response to nutrient deprivation by controlling lipid metabolism (PubMed:23604316). Specifically, involved in the breakdown of lipids during lipophagy, a process during which lipids contained in lipid droplets that have been delivered to lysosomes by autophagy are degraded (PubMed:23604316).</text>
</comment>
<comment type="biophysicochemical properties">
    <phDependence>
        <text evidence="8">Optimum pH is acidic.</text>
    </phDependence>
</comment>
<comment type="subcellular location">
    <subcellularLocation>
        <location evidence="5">Secreted</location>
    </subcellularLocation>
    <subcellularLocation>
        <location evidence="5">Lysosome lumen</location>
    </subcellularLocation>
    <text evidence="5">Secreted into the intestinal lumen.</text>
</comment>
<comment type="induction">
    <text evidence="5 6">Up-regulated in the intestine by fasting (PubMed:23604316). Down-regulated in response to a high-glucose diet (PubMed:29113111).</text>
</comment>
<comment type="similarity">
    <text evidence="2">Belongs to the AB hydrolase superfamily. Lipase family.</text>
</comment>
<organism evidence="9">
    <name type="scientific">Caenorhabditis elegans</name>
    <dbReference type="NCBI Taxonomy" id="6239"/>
    <lineage>
        <taxon>Eukaryota</taxon>
        <taxon>Metazoa</taxon>
        <taxon>Ecdysozoa</taxon>
        <taxon>Nematoda</taxon>
        <taxon>Chromadorea</taxon>
        <taxon>Rhabditida</taxon>
        <taxon>Rhabditina</taxon>
        <taxon>Rhabditomorpha</taxon>
        <taxon>Rhabditoidea</taxon>
        <taxon>Rhabditidae</taxon>
        <taxon>Peloderinae</taxon>
        <taxon>Caenorhabditis</taxon>
    </lineage>
</organism>
<evidence type="ECO:0000255" key="1"/>
<evidence type="ECO:0000255" key="2">
    <source>
        <dbReference type="PIRNR" id="PIRNR000862"/>
    </source>
</evidence>
<evidence type="ECO:0000255" key="3">
    <source>
        <dbReference type="PIRSR" id="PIRSR000862-1"/>
    </source>
</evidence>
<evidence type="ECO:0000255" key="4">
    <source>
        <dbReference type="PROSITE-ProRule" id="PRU00498"/>
    </source>
</evidence>
<evidence type="ECO:0000269" key="5">
    <source>
    </source>
</evidence>
<evidence type="ECO:0000269" key="6">
    <source>
    </source>
</evidence>
<evidence type="ECO:0000305" key="7"/>
<evidence type="ECO:0000305" key="8">
    <source>
    </source>
</evidence>
<evidence type="ECO:0000312" key="9">
    <source>
        <dbReference type="Proteomes" id="UP000001940"/>
    </source>
</evidence>
<evidence type="ECO:0000312" key="10">
    <source>
        <dbReference type="WormBase" id="R11G11.14"/>
    </source>
</evidence>
<sequence length="404" mass="45779">MCSSLCALLLVILAVHNVHAKSDPELHMTTPQIIERWGYPAMIYSVTTDDGYILELHRIPHGKTNVTWPNGKQPVVFMQHGLLCASTDWTMNLPEQSAAFIFADAGFDVWLGNMRGNTYSMKHKNLKASHSDFWEWSWDEMATYDLPAMIDKVLEVTGQESLYYMGHSQGTLTMFSHLSKDDGIFAKKIKKFFALAPVGSVKDIKGFLSFFAHYFSLEFDGWFDVFGAGEFLPNNWAMKLAAKDICGGLKIESDLCDNVCFLIAGPESDQWNSTRVPVYASHDPAGTATQNIVHWIQMVRHGGVPAYDWGSKENKKKYGQANPPEYDFTAIKGTQIYLYWSDADWLADKTDITNYLLTRLNPAIIAQNNYFTDYNHFDFVFGLRAPNDIYLPIVDICTKDYNGK</sequence>
<gene>
    <name evidence="10" type="primary">lipl-3</name>
    <name evidence="10" type="ORF">R11G11.14</name>
</gene>
<feature type="signal peptide" evidence="1">
    <location>
        <begin position="1"/>
        <end position="20"/>
    </location>
</feature>
<feature type="chain" id="PRO_5004157979" description="Lipase lipl-3" evidence="1">
    <location>
        <begin position="21"/>
        <end position="404"/>
    </location>
</feature>
<feature type="active site" description="Nucleophile" evidence="3">
    <location>
        <position position="168"/>
    </location>
</feature>
<feature type="active site" description="Charge relay system" evidence="3">
    <location>
        <position position="344"/>
    </location>
</feature>
<feature type="active site" description="Charge relay system" evidence="3">
    <location>
        <position position="376"/>
    </location>
</feature>
<feature type="glycosylation site" description="N-linked (GlcNAc...) asparagine" evidence="4">
    <location>
        <position position="65"/>
    </location>
</feature>
<feature type="glycosylation site" description="N-linked (GlcNAc...) asparagine" evidence="4">
    <location>
        <position position="272"/>
    </location>
</feature>
<protein>
    <recommendedName>
        <fullName evidence="2">Lipase lipl-3</fullName>
        <ecNumber evidence="8">3.1.1.-</ecNumber>
    </recommendedName>
    <alternativeName>
        <fullName evidence="10">Lipase-like 3</fullName>
    </alternativeName>
</protein>
<dbReference type="EC" id="3.1.1.-" evidence="8"/>
<dbReference type="EMBL" id="BX284605">
    <property type="protein sequence ID" value="CCD64488.1"/>
    <property type="molecule type" value="Genomic_DNA"/>
</dbReference>
<dbReference type="PIR" id="H88930">
    <property type="entry name" value="H88930"/>
</dbReference>
<dbReference type="RefSeq" id="NP_503233.1">
    <property type="nucleotide sequence ID" value="NM_070832.4"/>
</dbReference>
<dbReference type="SMR" id="O16956"/>
<dbReference type="FunCoup" id="O16956">
    <property type="interactions" value="123"/>
</dbReference>
<dbReference type="STRING" id="6239.R11G11.14.1"/>
<dbReference type="ESTHER" id="caeel-R11G11.14">
    <property type="family name" value="Acidic_Lipase"/>
</dbReference>
<dbReference type="MEROPS" id="S33.B10"/>
<dbReference type="GlyCosmos" id="O16956">
    <property type="glycosylation" value="2 sites, No reported glycans"/>
</dbReference>
<dbReference type="PaxDb" id="6239-R11G11.14"/>
<dbReference type="PeptideAtlas" id="O16956"/>
<dbReference type="EnsemblMetazoa" id="R11G11.14.1">
    <property type="protein sequence ID" value="R11G11.14.1"/>
    <property type="gene ID" value="WBGene00020016"/>
</dbReference>
<dbReference type="GeneID" id="178572"/>
<dbReference type="KEGG" id="cel:CELE_R11G11.14"/>
<dbReference type="UCSC" id="R11G11.14">
    <property type="organism name" value="c. elegans"/>
</dbReference>
<dbReference type="AGR" id="WB:WBGene00020016"/>
<dbReference type="CTD" id="178572"/>
<dbReference type="WormBase" id="R11G11.14">
    <property type="protein sequence ID" value="CE28762"/>
    <property type="gene ID" value="WBGene00020016"/>
    <property type="gene designation" value="lipl-3"/>
</dbReference>
<dbReference type="eggNOG" id="KOG2624">
    <property type="taxonomic scope" value="Eukaryota"/>
</dbReference>
<dbReference type="GeneTree" id="ENSGT00940000169551"/>
<dbReference type="HOGENOM" id="CLU_010974_0_0_1"/>
<dbReference type="InParanoid" id="O16956"/>
<dbReference type="OMA" id="GHMPTKA"/>
<dbReference type="OrthoDB" id="9974421at2759"/>
<dbReference type="PhylomeDB" id="O16956"/>
<dbReference type="PRO" id="PR:O16956"/>
<dbReference type="Proteomes" id="UP000001940">
    <property type="component" value="Chromosome V"/>
</dbReference>
<dbReference type="Bgee" id="WBGene00020016">
    <property type="expression patterns" value="Expressed in larva and 1 other cell type or tissue"/>
</dbReference>
<dbReference type="GO" id="GO:0005576">
    <property type="term" value="C:extracellular region"/>
    <property type="evidence" value="ECO:0007669"/>
    <property type="project" value="UniProtKB-SubCell"/>
</dbReference>
<dbReference type="GO" id="GO:0043202">
    <property type="term" value="C:lysosomal lumen"/>
    <property type="evidence" value="ECO:0007669"/>
    <property type="project" value="UniProtKB-SubCell"/>
</dbReference>
<dbReference type="GO" id="GO:0005764">
    <property type="term" value="C:lysosome"/>
    <property type="evidence" value="ECO:0000314"/>
    <property type="project" value="WormBase"/>
</dbReference>
<dbReference type="GO" id="GO:0016788">
    <property type="term" value="F:hydrolase activity, acting on ester bonds"/>
    <property type="evidence" value="ECO:0007669"/>
    <property type="project" value="InterPro"/>
</dbReference>
<dbReference type="GO" id="GO:0016042">
    <property type="term" value="P:lipid catabolic process"/>
    <property type="evidence" value="ECO:0000316"/>
    <property type="project" value="UniProtKB"/>
</dbReference>
<dbReference type="FunFam" id="3.40.50.1820:FF:000021">
    <property type="entry name" value="Lipase"/>
    <property type="match status" value="1"/>
</dbReference>
<dbReference type="Gene3D" id="3.40.50.1820">
    <property type="entry name" value="alpha/beta hydrolase"/>
    <property type="match status" value="1"/>
</dbReference>
<dbReference type="InterPro" id="IPR029058">
    <property type="entry name" value="AB_hydrolase_fold"/>
</dbReference>
<dbReference type="InterPro" id="IPR006693">
    <property type="entry name" value="AB_hydrolase_lipase"/>
</dbReference>
<dbReference type="InterPro" id="IPR025483">
    <property type="entry name" value="Lipase_euk"/>
</dbReference>
<dbReference type="PANTHER" id="PTHR11005">
    <property type="entry name" value="LYSOSOMAL ACID LIPASE-RELATED"/>
    <property type="match status" value="1"/>
</dbReference>
<dbReference type="Pfam" id="PF04083">
    <property type="entry name" value="Abhydro_lipase"/>
    <property type="match status" value="1"/>
</dbReference>
<dbReference type="PIRSF" id="PIRSF000862">
    <property type="entry name" value="Steryl_ester_lip"/>
    <property type="match status" value="1"/>
</dbReference>
<dbReference type="SUPFAM" id="SSF53474">
    <property type="entry name" value="alpha/beta-Hydrolases"/>
    <property type="match status" value="1"/>
</dbReference>
<dbReference type="PROSITE" id="PS00120">
    <property type="entry name" value="LIPASE_SER"/>
    <property type="match status" value="1"/>
</dbReference>
<keyword id="KW-0325">Glycoprotein</keyword>
<keyword id="KW-0378">Hydrolase</keyword>
<keyword id="KW-0442">Lipid degradation</keyword>
<keyword id="KW-0443">Lipid metabolism</keyword>
<keyword id="KW-0458">Lysosome</keyword>
<keyword id="KW-1185">Reference proteome</keyword>
<keyword id="KW-0964">Secreted</keyword>
<keyword id="KW-0732">Signal</keyword>
<proteinExistence type="evidence at transcript level"/>
<accession>O16956</accession>
<reference evidence="9" key="1">
    <citation type="journal article" date="1998" name="Science">
        <title>Genome sequence of the nematode C. elegans: a platform for investigating biology.</title>
        <authorList>
            <consortium name="The C. elegans sequencing consortium"/>
        </authorList>
    </citation>
    <scope>NUCLEOTIDE SEQUENCE [LARGE SCALE GENOMIC DNA]</scope>
    <source>
        <strain evidence="9">Bristol N2</strain>
    </source>
</reference>
<reference evidence="7" key="2">
    <citation type="journal article" date="2013" name="Nat. Cell Biol.">
        <title>MXL-3 and HLH-30 transcriptionally link lipolysis and autophagy to nutrient availability.</title>
        <authorList>
            <person name="O'Rourke E.J."/>
            <person name="Ruvkun G."/>
        </authorList>
    </citation>
    <scope>FUNCTION</scope>
    <scope>BIOPHYSICOCHEMICAL PROPERTIES</scope>
    <scope>SUBCELLULAR LOCATION</scope>
    <scope>INDUCTION</scope>
</reference>
<reference evidence="7" key="3">
    <citation type="journal article" date="2017" name="Genes (Basel)">
        <title>The MXL-3/SBP-1 Axis Is Responsible for Glucose-Dependent Fat Accumulation in C. elegans.</title>
        <authorList>
            <person name="Mejia-Martinez F."/>
            <person name="Franco-Juarez B."/>
            <person name="Moreno-Arriola E."/>
            <person name="Hernandez-Vazquez A."/>
            <person name="Martinez-Avila M."/>
            <person name="Gomez-Manzo S."/>
            <person name="Marcial-Quino J."/>
            <person name="Carvajal K."/>
            <person name="Velazquez-Arellano A."/>
            <person name="Ortega-Cuellar D."/>
        </authorList>
    </citation>
    <scope>INDUCTION</scope>
</reference>
<name>LIPL3_CAEEL</name>